<evidence type="ECO:0000255" key="1">
    <source>
        <dbReference type="HAMAP-Rule" id="MF_00340"/>
    </source>
</evidence>
<evidence type="ECO:0000305" key="2"/>
<reference key="1">
    <citation type="journal article" date="2007" name="J. Bacteriol.">
        <title>Genome sequence and analysis of the soil cellulolytic actinomycete Thermobifida fusca YX.</title>
        <authorList>
            <person name="Lykidis A."/>
            <person name="Mavromatis K."/>
            <person name="Ivanova N."/>
            <person name="Anderson I."/>
            <person name="Land M."/>
            <person name="DiBartolo G."/>
            <person name="Martinez M."/>
            <person name="Lapidus A."/>
            <person name="Lucas S."/>
            <person name="Copeland A."/>
            <person name="Richardson P."/>
            <person name="Wilson D.B."/>
            <person name="Kyrpides N."/>
        </authorList>
    </citation>
    <scope>NUCLEOTIDE SEQUENCE [LARGE SCALE GENOMIC DNA]</scope>
    <source>
        <strain>YX</strain>
    </source>
</reference>
<name>RL32_THEFY</name>
<keyword id="KW-0687">Ribonucleoprotein</keyword>
<keyword id="KW-0689">Ribosomal protein</keyword>
<dbReference type="EMBL" id="CP000088">
    <property type="protein sequence ID" value="AAZ54688.1"/>
    <property type="molecule type" value="Genomic_DNA"/>
</dbReference>
<dbReference type="SMR" id="Q47S79"/>
<dbReference type="STRING" id="269800.Tfu_0650"/>
<dbReference type="KEGG" id="tfu:Tfu_0650"/>
<dbReference type="eggNOG" id="COG0333">
    <property type="taxonomic scope" value="Bacteria"/>
</dbReference>
<dbReference type="HOGENOM" id="CLU_129084_1_1_11"/>
<dbReference type="OrthoDB" id="9807363at2"/>
<dbReference type="GO" id="GO:0015934">
    <property type="term" value="C:large ribosomal subunit"/>
    <property type="evidence" value="ECO:0007669"/>
    <property type="project" value="InterPro"/>
</dbReference>
<dbReference type="GO" id="GO:0003735">
    <property type="term" value="F:structural constituent of ribosome"/>
    <property type="evidence" value="ECO:0007669"/>
    <property type="project" value="InterPro"/>
</dbReference>
<dbReference type="GO" id="GO:0006412">
    <property type="term" value="P:translation"/>
    <property type="evidence" value="ECO:0007669"/>
    <property type="project" value="UniProtKB-UniRule"/>
</dbReference>
<dbReference type="HAMAP" id="MF_00340">
    <property type="entry name" value="Ribosomal_bL32"/>
    <property type="match status" value="1"/>
</dbReference>
<dbReference type="InterPro" id="IPR002677">
    <property type="entry name" value="Ribosomal_bL32"/>
</dbReference>
<dbReference type="InterPro" id="IPR044957">
    <property type="entry name" value="Ribosomal_bL32_bact"/>
</dbReference>
<dbReference type="InterPro" id="IPR011332">
    <property type="entry name" value="Ribosomal_zn-bd"/>
</dbReference>
<dbReference type="NCBIfam" id="TIGR01031">
    <property type="entry name" value="rpmF_bact"/>
    <property type="match status" value="1"/>
</dbReference>
<dbReference type="PANTHER" id="PTHR35534">
    <property type="entry name" value="50S RIBOSOMAL PROTEIN L32"/>
    <property type="match status" value="1"/>
</dbReference>
<dbReference type="PANTHER" id="PTHR35534:SF1">
    <property type="entry name" value="LARGE RIBOSOMAL SUBUNIT PROTEIN BL32"/>
    <property type="match status" value="1"/>
</dbReference>
<dbReference type="Pfam" id="PF01783">
    <property type="entry name" value="Ribosomal_L32p"/>
    <property type="match status" value="1"/>
</dbReference>
<dbReference type="SUPFAM" id="SSF57829">
    <property type="entry name" value="Zn-binding ribosomal proteins"/>
    <property type="match status" value="1"/>
</dbReference>
<organism>
    <name type="scientific">Thermobifida fusca (strain YX)</name>
    <dbReference type="NCBI Taxonomy" id="269800"/>
    <lineage>
        <taxon>Bacteria</taxon>
        <taxon>Bacillati</taxon>
        <taxon>Actinomycetota</taxon>
        <taxon>Actinomycetes</taxon>
        <taxon>Streptosporangiales</taxon>
        <taxon>Nocardiopsidaceae</taxon>
        <taxon>Thermobifida</taxon>
    </lineage>
</organism>
<sequence>MAVPKRKMSRSNTRVRRSQWKAARPLLTSCPRCRDPKLPHVACPTCGTYSNRQVINPA</sequence>
<gene>
    <name evidence="1" type="primary">rpmF</name>
    <name type="ordered locus">Tfu_0650</name>
</gene>
<comment type="similarity">
    <text evidence="1">Belongs to the bacterial ribosomal protein bL32 family.</text>
</comment>
<accession>Q47S79</accession>
<feature type="chain" id="PRO_0000225774" description="Large ribosomal subunit protein bL32">
    <location>
        <begin position="1"/>
        <end position="58"/>
    </location>
</feature>
<protein>
    <recommendedName>
        <fullName evidence="1">Large ribosomal subunit protein bL32</fullName>
    </recommendedName>
    <alternativeName>
        <fullName evidence="2">50S ribosomal protein L32</fullName>
    </alternativeName>
</protein>
<proteinExistence type="inferred from homology"/>